<accession>A1KGI9</accession>
<organism>
    <name type="scientific">Mycobacterium bovis (strain BCG / Pasteur 1173P2)</name>
    <dbReference type="NCBI Taxonomy" id="410289"/>
    <lineage>
        <taxon>Bacteria</taxon>
        <taxon>Bacillati</taxon>
        <taxon>Actinomycetota</taxon>
        <taxon>Actinomycetes</taxon>
        <taxon>Mycobacteriales</taxon>
        <taxon>Mycobacteriaceae</taxon>
        <taxon>Mycobacterium</taxon>
        <taxon>Mycobacterium tuberculosis complex</taxon>
    </lineage>
</organism>
<reference key="1">
    <citation type="journal article" date="2007" name="Proc. Natl. Acad. Sci. U.S.A.">
        <title>Genome plasticity of BCG and impact on vaccine efficacy.</title>
        <authorList>
            <person name="Brosch R."/>
            <person name="Gordon S.V."/>
            <person name="Garnier T."/>
            <person name="Eiglmeier K."/>
            <person name="Frigui W."/>
            <person name="Valenti P."/>
            <person name="Dos Santos S."/>
            <person name="Duthoy S."/>
            <person name="Lacroix C."/>
            <person name="Garcia-Pelayo C."/>
            <person name="Inwald J.K."/>
            <person name="Golby P."/>
            <person name="Garcia J.N."/>
            <person name="Hewinson R.G."/>
            <person name="Behr M.A."/>
            <person name="Quail M.A."/>
            <person name="Churcher C."/>
            <person name="Barrell B.G."/>
            <person name="Parkhill J."/>
            <person name="Cole S.T."/>
        </authorList>
    </citation>
    <scope>NUCLEOTIDE SEQUENCE [LARGE SCALE GENOMIC DNA]</scope>
    <source>
        <strain>BCG / Pasteur 1173P2</strain>
    </source>
</reference>
<protein>
    <recommendedName>
        <fullName evidence="1">Large ribosomal subunit protein uL16</fullName>
    </recommendedName>
    <alternativeName>
        <fullName evidence="3">50S ribosomal protein L16</fullName>
    </alternativeName>
</protein>
<feature type="chain" id="PRO_1000054653" description="Large ribosomal subunit protein uL16">
    <location>
        <begin position="1"/>
        <end position="138"/>
    </location>
</feature>
<feature type="region of interest" description="Disordered" evidence="2">
    <location>
        <begin position="1"/>
        <end position="22"/>
    </location>
</feature>
<feature type="compositionally biased region" description="Basic residues" evidence="2">
    <location>
        <begin position="1"/>
        <end position="17"/>
    </location>
</feature>
<keyword id="KW-0687">Ribonucleoprotein</keyword>
<keyword id="KW-0689">Ribosomal protein</keyword>
<keyword id="KW-0694">RNA-binding</keyword>
<keyword id="KW-0699">rRNA-binding</keyword>
<keyword id="KW-0820">tRNA-binding</keyword>
<comment type="function">
    <text evidence="1">Binds 23S rRNA and is also seen to make contacts with the A and possibly P site tRNAs.</text>
</comment>
<comment type="subunit">
    <text evidence="1">Part of the 50S ribosomal subunit.</text>
</comment>
<comment type="similarity">
    <text evidence="1">Belongs to the universal ribosomal protein uL16 family.</text>
</comment>
<dbReference type="EMBL" id="AM408590">
    <property type="protein sequence ID" value="CAL70744.1"/>
    <property type="molecule type" value="Genomic_DNA"/>
</dbReference>
<dbReference type="RefSeq" id="WP_003403592.1">
    <property type="nucleotide sequence ID" value="NC_008769.1"/>
</dbReference>
<dbReference type="SMR" id="A1KGI9"/>
<dbReference type="KEGG" id="mbb:BCG_0758"/>
<dbReference type="HOGENOM" id="CLU_078858_2_1_11"/>
<dbReference type="Proteomes" id="UP000001472">
    <property type="component" value="Chromosome"/>
</dbReference>
<dbReference type="GO" id="GO:0022625">
    <property type="term" value="C:cytosolic large ribosomal subunit"/>
    <property type="evidence" value="ECO:0007669"/>
    <property type="project" value="TreeGrafter"/>
</dbReference>
<dbReference type="GO" id="GO:0019843">
    <property type="term" value="F:rRNA binding"/>
    <property type="evidence" value="ECO:0007669"/>
    <property type="project" value="UniProtKB-UniRule"/>
</dbReference>
<dbReference type="GO" id="GO:0003735">
    <property type="term" value="F:structural constituent of ribosome"/>
    <property type="evidence" value="ECO:0007669"/>
    <property type="project" value="InterPro"/>
</dbReference>
<dbReference type="GO" id="GO:0000049">
    <property type="term" value="F:tRNA binding"/>
    <property type="evidence" value="ECO:0007669"/>
    <property type="project" value="UniProtKB-KW"/>
</dbReference>
<dbReference type="GO" id="GO:0006412">
    <property type="term" value="P:translation"/>
    <property type="evidence" value="ECO:0007669"/>
    <property type="project" value="UniProtKB-UniRule"/>
</dbReference>
<dbReference type="CDD" id="cd01433">
    <property type="entry name" value="Ribosomal_L16_L10e"/>
    <property type="match status" value="1"/>
</dbReference>
<dbReference type="FunFam" id="3.90.1170.10:FF:000001">
    <property type="entry name" value="50S ribosomal protein L16"/>
    <property type="match status" value="1"/>
</dbReference>
<dbReference type="Gene3D" id="3.90.1170.10">
    <property type="entry name" value="Ribosomal protein L10e/L16"/>
    <property type="match status" value="1"/>
</dbReference>
<dbReference type="HAMAP" id="MF_01342">
    <property type="entry name" value="Ribosomal_uL16"/>
    <property type="match status" value="1"/>
</dbReference>
<dbReference type="InterPro" id="IPR047873">
    <property type="entry name" value="Ribosomal_uL16"/>
</dbReference>
<dbReference type="InterPro" id="IPR000114">
    <property type="entry name" value="Ribosomal_uL16_bact-type"/>
</dbReference>
<dbReference type="InterPro" id="IPR020798">
    <property type="entry name" value="Ribosomal_uL16_CS"/>
</dbReference>
<dbReference type="InterPro" id="IPR016180">
    <property type="entry name" value="Ribosomal_uL16_dom"/>
</dbReference>
<dbReference type="InterPro" id="IPR036920">
    <property type="entry name" value="Ribosomal_uL16_sf"/>
</dbReference>
<dbReference type="NCBIfam" id="TIGR01164">
    <property type="entry name" value="rplP_bact"/>
    <property type="match status" value="1"/>
</dbReference>
<dbReference type="PANTHER" id="PTHR12220">
    <property type="entry name" value="50S/60S RIBOSOMAL PROTEIN L16"/>
    <property type="match status" value="1"/>
</dbReference>
<dbReference type="PANTHER" id="PTHR12220:SF13">
    <property type="entry name" value="LARGE RIBOSOMAL SUBUNIT PROTEIN UL16M"/>
    <property type="match status" value="1"/>
</dbReference>
<dbReference type="Pfam" id="PF00252">
    <property type="entry name" value="Ribosomal_L16"/>
    <property type="match status" value="1"/>
</dbReference>
<dbReference type="PRINTS" id="PR00060">
    <property type="entry name" value="RIBOSOMALL16"/>
</dbReference>
<dbReference type="SUPFAM" id="SSF54686">
    <property type="entry name" value="Ribosomal protein L16p/L10e"/>
    <property type="match status" value="1"/>
</dbReference>
<dbReference type="PROSITE" id="PS00586">
    <property type="entry name" value="RIBOSOMAL_L16_1"/>
    <property type="match status" value="1"/>
</dbReference>
<dbReference type="PROSITE" id="PS00701">
    <property type="entry name" value="RIBOSOMAL_L16_2"/>
    <property type="match status" value="1"/>
</dbReference>
<sequence>MLIPRKVKHRKQHHPRQRGIASGGTTVNFGDYGIQALEHAYVTNRQIESARIAINRHIKRGGKVWINIFPDRPLTKKPAETRMGSGKGSPEWWVANVKPGRVLFELSYPNEGVARAALTRAIHKLPIKARIITREEQF</sequence>
<proteinExistence type="inferred from homology"/>
<name>RL16_MYCBP</name>
<gene>
    <name evidence="1" type="primary">rplP</name>
    <name type="ordered locus">BCG_0758</name>
</gene>
<evidence type="ECO:0000255" key="1">
    <source>
        <dbReference type="HAMAP-Rule" id="MF_01342"/>
    </source>
</evidence>
<evidence type="ECO:0000256" key="2">
    <source>
        <dbReference type="SAM" id="MobiDB-lite"/>
    </source>
</evidence>
<evidence type="ECO:0000305" key="3"/>